<organism>
    <name type="scientific">Escherichia coli O139:H28 (strain E24377A / ETEC)</name>
    <dbReference type="NCBI Taxonomy" id="331111"/>
    <lineage>
        <taxon>Bacteria</taxon>
        <taxon>Pseudomonadati</taxon>
        <taxon>Pseudomonadota</taxon>
        <taxon>Gammaproteobacteria</taxon>
        <taxon>Enterobacterales</taxon>
        <taxon>Enterobacteriaceae</taxon>
        <taxon>Escherichia</taxon>
    </lineage>
</organism>
<sequence>MYQDKILVRQLGLQPYEPISQAMHEFTDTRDDSTLDEIWLVEHYPVFTQGQAGKAEHILMPGDIPVIQSDRGGQVTYHGPGQQVMYVLLNLKRRKLGVRELVTLLEQTVVNTLAELGIEAHPRADAPGVYVGEKKICSLGLRIRRGCSFHGLALNVNMDLSPFLRINPCGYAGMEMAKISQWKPEATTNNIAPRLLENILALLNNPDFEYITA</sequence>
<gene>
    <name evidence="1" type="primary">lipB</name>
    <name type="ordered locus">EcE24377A_0655</name>
</gene>
<evidence type="ECO:0000255" key="1">
    <source>
        <dbReference type="HAMAP-Rule" id="MF_00013"/>
    </source>
</evidence>
<evidence type="ECO:0000255" key="2">
    <source>
        <dbReference type="PROSITE-ProRule" id="PRU01067"/>
    </source>
</evidence>
<proteinExistence type="inferred from homology"/>
<name>LIPB_ECO24</name>
<reference key="1">
    <citation type="journal article" date="2008" name="J. Bacteriol.">
        <title>The pangenome structure of Escherichia coli: comparative genomic analysis of E. coli commensal and pathogenic isolates.</title>
        <authorList>
            <person name="Rasko D.A."/>
            <person name="Rosovitz M.J."/>
            <person name="Myers G.S.A."/>
            <person name="Mongodin E.F."/>
            <person name="Fricke W.F."/>
            <person name="Gajer P."/>
            <person name="Crabtree J."/>
            <person name="Sebaihia M."/>
            <person name="Thomson N.R."/>
            <person name="Chaudhuri R."/>
            <person name="Henderson I.R."/>
            <person name="Sperandio V."/>
            <person name="Ravel J."/>
        </authorList>
    </citation>
    <scope>NUCLEOTIDE SEQUENCE [LARGE SCALE GENOMIC DNA]</scope>
    <source>
        <strain>E24377A / ETEC</strain>
    </source>
</reference>
<protein>
    <recommendedName>
        <fullName evidence="1">Octanoyltransferase</fullName>
        <ecNumber evidence="1">2.3.1.181</ecNumber>
    </recommendedName>
    <alternativeName>
        <fullName evidence="1">Lipoate-protein ligase B</fullName>
    </alternativeName>
    <alternativeName>
        <fullName evidence="1">Lipoyl/octanoyl transferase</fullName>
    </alternativeName>
    <alternativeName>
        <fullName evidence="1">Octanoyl-[acyl-carrier-protein]-protein N-octanoyltransferase</fullName>
    </alternativeName>
</protein>
<accession>A7ZJ18</accession>
<dbReference type="EC" id="2.3.1.181" evidence="1"/>
<dbReference type="EMBL" id="CP000800">
    <property type="protein sequence ID" value="ABV17238.1"/>
    <property type="molecule type" value="Genomic_DNA"/>
</dbReference>
<dbReference type="RefSeq" id="WP_000284027.1">
    <property type="nucleotide sequence ID" value="NC_009801.1"/>
</dbReference>
<dbReference type="SMR" id="A7ZJ18"/>
<dbReference type="GeneID" id="93776852"/>
<dbReference type="KEGG" id="ecw:EcE24377A_0655"/>
<dbReference type="HOGENOM" id="CLU_035168_3_1_6"/>
<dbReference type="UniPathway" id="UPA00538">
    <property type="reaction ID" value="UER00592"/>
</dbReference>
<dbReference type="Proteomes" id="UP000001122">
    <property type="component" value="Chromosome"/>
</dbReference>
<dbReference type="GO" id="GO:0005737">
    <property type="term" value="C:cytoplasm"/>
    <property type="evidence" value="ECO:0007669"/>
    <property type="project" value="UniProtKB-SubCell"/>
</dbReference>
<dbReference type="GO" id="GO:0033819">
    <property type="term" value="F:lipoyl(octanoyl) transferase activity"/>
    <property type="evidence" value="ECO:0007669"/>
    <property type="project" value="UniProtKB-EC"/>
</dbReference>
<dbReference type="GO" id="GO:0036211">
    <property type="term" value="P:protein modification process"/>
    <property type="evidence" value="ECO:0007669"/>
    <property type="project" value="InterPro"/>
</dbReference>
<dbReference type="CDD" id="cd16444">
    <property type="entry name" value="LipB"/>
    <property type="match status" value="1"/>
</dbReference>
<dbReference type="FunFam" id="3.30.930.10:FF:000020">
    <property type="entry name" value="Octanoyltransferase"/>
    <property type="match status" value="1"/>
</dbReference>
<dbReference type="Gene3D" id="3.30.930.10">
    <property type="entry name" value="Bira Bifunctional Protein, Domain 2"/>
    <property type="match status" value="1"/>
</dbReference>
<dbReference type="HAMAP" id="MF_00013">
    <property type="entry name" value="LipB"/>
    <property type="match status" value="1"/>
</dbReference>
<dbReference type="InterPro" id="IPR045864">
    <property type="entry name" value="aa-tRNA-synth_II/BPL/LPL"/>
</dbReference>
<dbReference type="InterPro" id="IPR004143">
    <property type="entry name" value="BPL_LPL_catalytic"/>
</dbReference>
<dbReference type="InterPro" id="IPR000544">
    <property type="entry name" value="Octanoyltransferase"/>
</dbReference>
<dbReference type="InterPro" id="IPR020605">
    <property type="entry name" value="Octanoyltransferase_CS"/>
</dbReference>
<dbReference type="NCBIfam" id="TIGR00214">
    <property type="entry name" value="lipB"/>
    <property type="match status" value="1"/>
</dbReference>
<dbReference type="NCBIfam" id="NF010922">
    <property type="entry name" value="PRK14342.1"/>
    <property type="match status" value="1"/>
</dbReference>
<dbReference type="PANTHER" id="PTHR10993:SF7">
    <property type="entry name" value="LIPOYLTRANSFERASE 2, MITOCHONDRIAL-RELATED"/>
    <property type="match status" value="1"/>
</dbReference>
<dbReference type="PANTHER" id="PTHR10993">
    <property type="entry name" value="OCTANOYLTRANSFERASE"/>
    <property type="match status" value="1"/>
</dbReference>
<dbReference type="Pfam" id="PF21948">
    <property type="entry name" value="LplA-B_cat"/>
    <property type="match status" value="1"/>
</dbReference>
<dbReference type="PIRSF" id="PIRSF016262">
    <property type="entry name" value="LPLase"/>
    <property type="match status" value="1"/>
</dbReference>
<dbReference type="SUPFAM" id="SSF55681">
    <property type="entry name" value="Class II aaRS and biotin synthetases"/>
    <property type="match status" value="1"/>
</dbReference>
<dbReference type="PROSITE" id="PS51733">
    <property type="entry name" value="BPL_LPL_CATALYTIC"/>
    <property type="match status" value="1"/>
</dbReference>
<dbReference type="PROSITE" id="PS01313">
    <property type="entry name" value="LIPB"/>
    <property type="match status" value="1"/>
</dbReference>
<keyword id="KW-0012">Acyltransferase</keyword>
<keyword id="KW-0963">Cytoplasm</keyword>
<keyword id="KW-1185">Reference proteome</keyword>
<keyword id="KW-0808">Transferase</keyword>
<comment type="function">
    <text evidence="1">Catalyzes the transfer of endogenously produced octanoic acid from octanoyl-acyl-carrier-protein onto the lipoyl domains of lipoate-dependent enzymes. Lipoyl-ACP can also act as a substrate although octanoyl-ACP is likely to be the physiological substrate.</text>
</comment>
<comment type="catalytic activity">
    <reaction evidence="1">
        <text>octanoyl-[ACP] + L-lysyl-[protein] = N(6)-octanoyl-L-lysyl-[protein] + holo-[ACP] + H(+)</text>
        <dbReference type="Rhea" id="RHEA:17665"/>
        <dbReference type="Rhea" id="RHEA-COMP:9636"/>
        <dbReference type="Rhea" id="RHEA-COMP:9685"/>
        <dbReference type="Rhea" id="RHEA-COMP:9752"/>
        <dbReference type="Rhea" id="RHEA-COMP:9928"/>
        <dbReference type="ChEBI" id="CHEBI:15378"/>
        <dbReference type="ChEBI" id="CHEBI:29969"/>
        <dbReference type="ChEBI" id="CHEBI:64479"/>
        <dbReference type="ChEBI" id="CHEBI:78463"/>
        <dbReference type="ChEBI" id="CHEBI:78809"/>
        <dbReference type="EC" id="2.3.1.181"/>
    </reaction>
</comment>
<comment type="pathway">
    <text evidence="1">Protein modification; protein lipoylation via endogenous pathway; protein N(6)-(lipoyl)lysine from octanoyl-[acyl-carrier-protein]: step 1/2.</text>
</comment>
<comment type="subcellular location">
    <subcellularLocation>
        <location evidence="1">Cytoplasm</location>
    </subcellularLocation>
</comment>
<comment type="miscellaneous">
    <text evidence="1">In the reaction, the free carboxyl group of octanoic acid is attached via an amide linkage to the epsilon-amino group of a specific lysine residue of lipoyl domains of lipoate-dependent enzymes.</text>
</comment>
<comment type="similarity">
    <text evidence="1">Belongs to the LipB family.</text>
</comment>
<feature type="chain" id="PRO_1000057103" description="Octanoyltransferase">
    <location>
        <begin position="1"/>
        <end position="213"/>
    </location>
</feature>
<feature type="domain" description="BPL/LPL catalytic" evidence="2">
    <location>
        <begin position="32"/>
        <end position="207"/>
    </location>
</feature>
<feature type="active site" description="Acyl-thioester intermediate" evidence="1">
    <location>
        <position position="169"/>
    </location>
</feature>
<feature type="binding site" evidence="1">
    <location>
        <begin position="71"/>
        <end position="78"/>
    </location>
    <ligand>
        <name>substrate</name>
    </ligand>
</feature>
<feature type="binding site" evidence="1">
    <location>
        <begin position="138"/>
        <end position="140"/>
    </location>
    <ligand>
        <name>substrate</name>
    </ligand>
</feature>
<feature type="binding site" evidence="1">
    <location>
        <begin position="151"/>
        <end position="153"/>
    </location>
    <ligand>
        <name>substrate</name>
    </ligand>
</feature>
<feature type="site" description="Lowers pKa of active site Cys" evidence="1">
    <location>
        <position position="135"/>
    </location>
</feature>